<dbReference type="EC" id="2.3.1.275" evidence="1"/>
<dbReference type="EMBL" id="AP008232">
    <property type="protein sequence ID" value="BAE73530.1"/>
    <property type="molecule type" value="Genomic_DNA"/>
</dbReference>
<dbReference type="RefSeq" id="WP_011410118.1">
    <property type="nucleotide sequence ID" value="NC_007712.1"/>
</dbReference>
<dbReference type="SMR" id="Q2NWE5"/>
<dbReference type="STRING" id="343509.SG0255"/>
<dbReference type="KEGG" id="sgl:SG0255"/>
<dbReference type="eggNOG" id="COG0344">
    <property type="taxonomic scope" value="Bacteria"/>
</dbReference>
<dbReference type="HOGENOM" id="CLU_081254_0_2_6"/>
<dbReference type="OrthoDB" id="9777124at2"/>
<dbReference type="UniPathway" id="UPA00085"/>
<dbReference type="Proteomes" id="UP000001932">
    <property type="component" value="Chromosome"/>
</dbReference>
<dbReference type="GO" id="GO:0005886">
    <property type="term" value="C:plasma membrane"/>
    <property type="evidence" value="ECO:0007669"/>
    <property type="project" value="UniProtKB-SubCell"/>
</dbReference>
<dbReference type="GO" id="GO:0043772">
    <property type="term" value="F:acyl-phosphate glycerol-3-phosphate acyltransferase activity"/>
    <property type="evidence" value="ECO:0007669"/>
    <property type="project" value="UniProtKB-UniRule"/>
</dbReference>
<dbReference type="GO" id="GO:0008654">
    <property type="term" value="P:phospholipid biosynthetic process"/>
    <property type="evidence" value="ECO:0007669"/>
    <property type="project" value="UniProtKB-UniRule"/>
</dbReference>
<dbReference type="HAMAP" id="MF_01043">
    <property type="entry name" value="PlsY"/>
    <property type="match status" value="1"/>
</dbReference>
<dbReference type="InterPro" id="IPR003811">
    <property type="entry name" value="G3P_acylTferase_PlsY"/>
</dbReference>
<dbReference type="NCBIfam" id="TIGR00023">
    <property type="entry name" value="glycerol-3-phosphate 1-O-acyltransferase PlsY"/>
    <property type="match status" value="1"/>
</dbReference>
<dbReference type="PANTHER" id="PTHR30309:SF0">
    <property type="entry name" value="GLYCEROL-3-PHOSPHATE ACYLTRANSFERASE-RELATED"/>
    <property type="match status" value="1"/>
</dbReference>
<dbReference type="PANTHER" id="PTHR30309">
    <property type="entry name" value="INNER MEMBRANE PROTEIN YGIH"/>
    <property type="match status" value="1"/>
</dbReference>
<dbReference type="Pfam" id="PF02660">
    <property type="entry name" value="G3P_acyltransf"/>
    <property type="match status" value="1"/>
</dbReference>
<dbReference type="SMART" id="SM01207">
    <property type="entry name" value="G3P_acyltransf"/>
    <property type="match status" value="1"/>
</dbReference>
<evidence type="ECO:0000255" key="1">
    <source>
        <dbReference type="HAMAP-Rule" id="MF_01043"/>
    </source>
</evidence>
<protein>
    <recommendedName>
        <fullName evidence="1">Glycerol-3-phosphate acyltransferase</fullName>
    </recommendedName>
    <alternativeName>
        <fullName evidence="1">Acyl-PO4 G3P acyltransferase</fullName>
    </alternativeName>
    <alternativeName>
        <fullName evidence="1">Acyl-phosphate--glycerol-3-phosphate acyltransferase</fullName>
    </alternativeName>
    <alternativeName>
        <fullName evidence="1">G3P acyltransferase</fullName>
        <shortName evidence="1">GPAT</shortName>
        <ecNumber evidence="1">2.3.1.275</ecNumber>
    </alternativeName>
    <alternativeName>
        <fullName evidence="1">Lysophosphatidic acid synthase</fullName>
        <shortName evidence="1">LPA synthase</shortName>
    </alternativeName>
</protein>
<comment type="function">
    <text evidence="1">Catalyzes the transfer of an acyl group from acyl-phosphate (acyl-PO(4)) to glycerol-3-phosphate (G3P) to form lysophosphatidic acid (LPA). This enzyme utilizes acyl-phosphate as fatty acyl donor, but not acyl-CoA or acyl-ACP.</text>
</comment>
<comment type="catalytic activity">
    <reaction evidence="1">
        <text>an acyl phosphate + sn-glycerol 3-phosphate = a 1-acyl-sn-glycero-3-phosphate + phosphate</text>
        <dbReference type="Rhea" id="RHEA:34075"/>
        <dbReference type="ChEBI" id="CHEBI:43474"/>
        <dbReference type="ChEBI" id="CHEBI:57597"/>
        <dbReference type="ChEBI" id="CHEBI:57970"/>
        <dbReference type="ChEBI" id="CHEBI:59918"/>
        <dbReference type="EC" id="2.3.1.275"/>
    </reaction>
</comment>
<comment type="pathway">
    <text evidence="1">Lipid metabolism; phospholipid metabolism.</text>
</comment>
<comment type="subunit">
    <text evidence="1">Probably interacts with PlsX.</text>
</comment>
<comment type="subcellular location">
    <subcellularLocation>
        <location evidence="1">Cell inner membrane</location>
        <topology evidence="1">Multi-pass membrane protein</topology>
    </subcellularLocation>
</comment>
<comment type="similarity">
    <text evidence="1">Belongs to the PlsY family.</text>
</comment>
<keyword id="KW-0997">Cell inner membrane</keyword>
<keyword id="KW-1003">Cell membrane</keyword>
<keyword id="KW-0444">Lipid biosynthesis</keyword>
<keyword id="KW-0443">Lipid metabolism</keyword>
<keyword id="KW-0472">Membrane</keyword>
<keyword id="KW-0594">Phospholipid biosynthesis</keyword>
<keyword id="KW-1208">Phospholipid metabolism</keyword>
<keyword id="KW-0808">Transferase</keyword>
<keyword id="KW-0812">Transmembrane</keyword>
<keyword id="KW-1133">Transmembrane helix</keyword>
<reference key="1">
    <citation type="journal article" date="2006" name="Genome Res.">
        <title>Massive genome erosion and functional adaptations provide insights into the symbiotic lifestyle of Sodalis glossinidius in the tsetse host.</title>
        <authorList>
            <person name="Toh H."/>
            <person name="Weiss B.L."/>
            <person name="Perkin S.A.H."/>
            <person name="Yamashita A."/>
            <person name="Oshima K."/>
            <person name="Hattori M."/>
            <person name="Aksoy S."/>
        </authorList>
    </citation>
    <scope>NUCLEOTIDE SEQUENCE [LARGE SCALE GENOMIC DNA]</scope>
    <source>
        <strain>morsitans</strain>
    </source>
</reference>
<accession>Q2NWE5</accession>
<feature type="chain" id="PRO_0000250331" description="Glycerol-3-phosphate acyltransferase">
    <location>
        <begin position="1"/>
        <end position="209"/>
    </location>
</feature>
<feature type="transmembrane region" description="Helical" evidence="1">
    <location>
        <begin position="4"/>
        <end position="24"/>
    </location>
</feature>
<feature type="transmembrane region" description="Helical" evidence="1">
    <location>
        <begin position="53"/>
        <end position="75"/>
    </location>
</feature>
<feature type="transmembrane region" description="Helical" evidence="1">
    <location>
        <begin position="80"/>
        <end position="102"/>
    </location>
</feature>
<feature type="transmembrane region" description="Helical" evidence="1">
    <location>
        <begin position="112"/>
        <end position="132"/>
    </location>
</feature>
<feature type="transmembrane region" description="Helical" evidence="1">
    <location>
        <begin position="138"/>
        <end position="158"/>
    </location>
</feature>
<organism>
    <name type="scientific">Sodalis glossinidius (strain morsitans)</name>
    <dbReference type="NCBI Taxonomy" id="343509"/>
    <lineage>
        <taxon>Bacteria</taxon>
        <taxon>Pseudomonadati</taxon>
        <taxon>Pseudomonadota</taxon>
        <taxon>Gammaproteobacteria</taxon>
        <taxon>Enterobacterales</taxon>
        <taxon>Bruguierivoracaceae</taxon>
        <taxon>Sodalis</taxon>
    </lineage>
</organism>
<proteinExistence type="inferred from homology"/>
<name>PLSY_SODGM</name>
<gene>
    <name evidence="1" type="primary">plsY</name>
    <name type="ordered locus">SG0255</name>
</gene>
<sequence>MNAIAIGMIIFAYLCGSVSNAILICRLARLPDPRTSGSGNPGATNVLRLGGKLAAAGVMVFDVLKGMIPVWIGYGLGLPPFWLGLVAIAACLGHIYPIFFHFRGGKGVATALGAIAPIGYDLSGLMIGTWLLTALLSGYSSLGAIVSALIAPFYVWWFKPQFTFPVAMLSCLVLLRHHDNIQRLWHGQESRIWHRRQKDRDIDRQQSKH</sequence>